<accession>Q4R363</accession>
<dbReference type="EMBL" id="AB179405">
    <property type="protein sequence ID" value="BAE02456.1"/>
    <property type="molecule type" value="mRNA"/>
</dbReference>
<dbReference type="RefSeq" id="NP_001306309.1">
    <property type="nucleotide sequence ID" value="NM_001319380.1"/>
</dbReference>
<dbReference type="SMR" id="Q4R363"/>
<dbReference type="eggNOG" id="ENOG502SSGK">
    <property type="taxonomic scope" value="Eukaryota"/>
</dbReference>
<dbReference type="Proteomes" id="UP000233100">
    <property type="component" value="Unplaced"/>
</dbReference>
<dbReference type="InterPro" id="IPR037758">
    <property type="entry name" value="Ccdc54"/>
</dbReference>
<dbReference type="PANTHER" id="PTHR37880">
    <property type="entry name" value="COILED-COIL DOMAIN-CONTAINING PROTEIN 54"/>
    <property type="match status" value="1"/>
</dbReference>
<dbReference type="PANTHER" id="PTHR37880:SF1">
    <property type="entry name" value="COILED-COIL DOMAIN-CONTAINING PROTEIN 54"/>
    <property type="match status" value="1"/>
</dbReference>
<evidence type="ECO:0000250" key="1">
    <source>
        <dbReference type="UniProtKB" id="Q8NEL0"/>
    </source>
</evidence>
<evidence type="ECO:0000255" key="2"/>
<evidence type="ECO:0000256" key="3">
    <source>
        <dbReference type="SAM" id="MobiDB-lite"/>
    </source>
</evidence>
<proteinExistence type="evidence at transcript level"/>
<keyword id="KW-0175">Coiled coil</keyword>
<keyword id="KW-0597">Phosphoprotein</keyword>
<keyword id="KW-1185">Reference proteome</keyword>
<sequence>MYTLHTKRVKAAAREMWTSNVSKVRQSFKNVYHKCKIRHQDSTRYPTVTSDDCNQDDVSYDGKMNLTVVLQDVKTAQVELFSQMTDIVHAIPKVHEKTDLYQKQMEVLETRMNVNEDKQGTTTKDILSMKEDIKALKKKVTELEKQNSYSRIHCLEIPEGERGEEITELLYKLIQPATLKNTLASTDREMSSAEPEKVPSYPKSTDHLEKITISPQIKTLKKRNHQNASRNFKIAKPNIYIYPDFSTWIKLTFVHGGKWTFFLSATKLEEFIQWLLSRPTILPEEPQVITQRYCPFTGLILSLTTICLSMFNNIYGFIRSLKEEVTRL</sequence>
<protein>
    <recommendedName>
        <fullName>Coiled-coil domain-containing protein 54</fullName>
    </recommendedName>
</protein>
<organism>
    <name type="scientific">Macaca fascicularis</name>
    <name type="common">Crab-eating macaque</name>
    <name type="synonym">Cynomolgus monkey</name>
    <dbReference type="NCBI Taxonomy" id="9541"/>
    <lineage>
        <taxon>Eukaryota</taxon>
        <taxon>Metazoa</taxon>
        <taxon>Chordata</taxon>
        <taxon>Craniata</taxon>
        <taxon>Vertebrata</taxon>
        <taxon>Euteleostomi</taxon>
        <taxon>Mammalia</taxon>
        <taxon>Eutheria</taxon>
        <taxon>Euarchontoglires</taxon>
        <taxon>Primates</taxon>
        <taxon>Haplorrhini</taxon>
        <taxon>Catarrhini</taxon>
        <taxon>Cercopithecidae</taxon>
        <taxon>Cercopithecinae</taxon>
        <taxon>Macaca</taxon>
    </lineage>
</organism>
<name>CCD54_MACFA</name>
<gene>
    <name type="primary">CCDC54</name>
    <name type="ORF">QtsA-19324</name>
</gene>
<reference key="1">
    <citation type="submission" date="2005-06" db="EMBL/GenBank/DDBJ databases">
        <title>DNA sequences of macaque genes expressed in brain or testis and its evolutionary implications.</title>
        <authorList>
            <consortium name="International consortium for macaque cDNA sequencing and analysis"/>
        </authorList>
    </citation>
    <scope>NUCLEOTIDE SEQUENCE [LARGE SCALE MRNA]</scope>
    <source>
        <tissue>Testis</tissue>
    </source>
</reference>
<feature type="chain" id="PRO_0000286669" description="Coiled-coil domain-containing protein 54">
    <location>
        <begin position="1"/>
        <end position="328"/>
    </location>
</feature>
<feature type="region of interest" description="Disordered" evidence="3">
    <location>
        <begin position="186"/>
        <end position="205"/>
    </location>
</feature>
<feature type="coiled-coil region" evidence="2">
    <location>
        <begin position="122"/>
        <end position="151"/>
    </location>
</feature>
<feature type="compositionally biased region" description="Basic and acidic residues" evidence="3">
    <location>
        <begin position="186"/>
        <end position="197"/>
    </location>
</feature>
<feature type="modified residue" description="Phosphothreonine" evidence="1">
    <location>
        <position position="182"/>
    </location>
</feature>